<dbReference type="EC" id="2.4.1.18" evidence="1"/>
<dbReference type="EMBL" id="CP000250">
    <property type="protein sequence ID" value="ABD06590.1"/>
    <property type="molecule type" value="Genomic_DNA"/>
</dbReference>
<dbReference type="RefSeq" id="WP_011440778.1">
    <property type="nucleotide sequence ID" value="NC_007778.1"/>
</dbReference>
<dbReference type="SMR" id="Q2IYX0"/>
<dbReference type="STRING" id="316058.RPB_1882"/>
<dbReference type="CAZy" id="CBM48">
    <property type="family name" value="Carbohydrate-Binding Module Family 48"/>
</dbReference>
<dbReference type="CAZy" id="GH13">
    <property type="family name" value="Glycoside Hydrolase Family 13"/>
</dbReference>
<dbReference type="KEGG" id="rpb:RPB_1882"/>
<dbReference type="eggNOG" id="COG0296">
    <property type="taxonomic scope" value="Bacteria"/>
</dbReference>
<dbReference type="HOGENOM" id="CLU_004245_3_2_5"/>
<dbReference type="OrthoDB" id="9800174at2"/>
<dbReference type="UniPathway" id="UPA00164"/>
<dbReference type="Proteomes" id="UP000008809">
    <property type="component" value="Chromosome"/>
</dbReference>
<dbReference type="GO" id="GO:0005829">
    <property type="term" value="C:cytosol"/>
    <property type="evidence" value="ECO:0007669"/>
    <property type="project" value="TreeGrafter"/>
</dbReference>
<dbReference type="GO" id="GO:0003844">
    <property type="term" value="F:1,4-alpha-glucan branching enzyme activity"/>
    <property type="evidence" value="ECO:0007669"/>
    <property type="project" value="UniProtKB-UniRule"/>
</dbReference>
<dbReference type="GO" id="GO:0043169">
    <property type="term" value="F:cation binding"/>
    <property type="evidence" value="ECO:0007669"/>
    <property type="project" value="InterPro"/>
</dbReference>
<dbReference type="GO" id="GO:0004553">
    <property type="term" value="F:hydrolase activity, hydrolyzing O-glycosyl compounds"/>
    <property type="evidence" value="ECO:0007669"/>
    <property type="project" value="InterPro"/>
</dbReference>
<dbReference type="GO" id="GO:0005978">
    <property type="term" value="P:glycogen biosynthetic process"/>
    <property type="evidence" value="ECO:0007669"/>
    <property type="project" value="UniProtKB-UniRule"/>
</dbReference>
<dbReference type="CDD" id="cd11322">
    <property type="entry name" value="AmyAc_Glg_BE"/>
    <property type="match status" value="1"/>
</dbReference>
<dbReference type="CDD" id="cd02855">
    <property type="entry name" value="E_set_GBE_prok_N"/>
    <property type="match status" value="1"/>
</dbReference>
<dbReference type="FunFam" id="2.60.40.10:FF:000169">
    <property type="entry name" value="1,4-alpha-glucan branching enzyme GlgB"/>
    <property type="match status" value="1"/>
</dbReference>
<dbReference type="FunFam" id="2.60.40.1180:FF:000002">
    <property type="entry name" value="1,4-alpha-glucan branching enzyme GlgB"/>
    <property type="match status" value="1"/>
</dbReference>
<dbReference type="FunFam" id="3.20.20.80:FF:000003">
    <property type="entry name" value="1,4-alpha-glucan branching enzyme GlgB"/>
    <property type="match status" value="1"/>
</dbReference>
<dbReference type="Gene3D" id="3.20.20.80">
    <property type="entry name" value="Glycosidases"/>
    <property type="match status" value="1"/>
</dbReference>
<dbReference type="Gene3D" id="2.60.40.1180">
    <property type="entry name" value="Golgi alpha-mannosidase II"/>
    <property type="match status" value="1"/>
</dbReference>
<dbReference type="Gene3D" id="2.60.40.10">
    <property type="entry name" value="Immunoglobulins"/>
    <property type="match status" value="2"/>
</dbReference>
<dbReference type="HAMAP" id="MF_00685">
    <property type="entry name" value="GlgB"/>
    <property type="match status" value="1"/>
</dbReference>
<dbReference type="InterPro" id="IPR006048">
    <property type="entry name" value="A-amylase/branching_C"/>
</dbReference>
<dbReference type="InterPro" id="IPR037439">
    <property type="entry name" value="Branching_enzy"/>
</dbReference>
<dbReference type="InterPro" id="IPR006407">
    <property type="entry name" value="GlgB"/>
</dbReference>
<dbReference type="InterPro" id="IPR054169">
    <property type="entry name" value="GlgB_N"/>
</dbReference>
<dbReference type="InterPro" id="IPR044143">
    <property type="entry name" value="GlgB_N_E_set_prok"/>
</dbReference>
<dbReference type="InterPro" id="IPR006047">
    <property type="entry name" value="Glyco_hydro_13_cat_dom"/>
</dbReference>
<dbReference type="InterPro" id="IPR004193">
    <property type="entry name" value="Glyco_hydro_13_N"/>
</dbReference>
<dbReference type="InterPro" id="IPR013780">
    <property type="entry name" value="Glyco_hydro_b"/>
</dbReference>
<dbReference type="InterPro" id="IPR017853">
    <property type="entry name" value="Glycoside_hydrolase_SF"/>
</dbReference>
<dbReference type="InterPro" id="IPR013783">
    <property type="entry name" value="Ig-like_fold"/>
</dbReference>
<dbReference type="InterPro" id="IPR014756">
    <property type="entry name" value="Ig_E-set"/>
</dbReference>
<dbReference type="NCBIfam" id="TIGR01515">
    <property type="entry name" value="branching_enzym"/>
    <property type="match status" value="1"/>
</dbReference>
<dbReference type="NCBIfam" id="NF003811">
    <property type="entry name" value="PRK05402.1"/>
    <property type="match status" value="1"/>
</dbReference>
<dbReference type="NCBIfam" id="NF008967">
    <property type="entry name" value="PRK12313.1"/>
    <property type="match status" value="1"/>
</dbReference>
<dbReference type="PANTHER" id="PTHR43651">
    <property type="entry name" value="1,4-ALPHA-GLUCAN-BRANCHING ENZYME"/>
    <property type="match status" value="1"/>
</dbReference>
<dbReference type="PANTHER" id="PTHR43651:SF3">
    <property type="entry name" value="1,4-ALPHA-GLUCAN-BRANCHING ENZYME"/>
    <property type="match status" value="1"/>
</dbReference>
<dbReference type="Pfam" id="PF00128">
    <property type="entry name" value="Alpha-amylase"/>
    <property type="match status" value="1"/>
</dbReference>
<dbReference type="Pfam" id="PF02806">
    <property type="entry name" value="Alpha-amylase_C"/>
    <property type="match status" value="1"/>
</dbReference>
<dbReference type="Pfam" id="PF02922">
    <property type="entry name" value="CBM_48"/>
    <property type="match status" value="1"/>
</dbReference>
<dbReference type="Pfam" id="PF22019">
    <property type="entry name" value="GlgB_N"/>
    <property type="match status" value="1"/>
</dbReference>
<dbReference type="PIRSF" id="PIRSF000463">
    <property type="entry name" value="GlgB"/>
    <property type="match status" value="1"/>
</dbReference>
<dbReference type="SMART" id="SM00642">
    <property type="entry name" value="Aamy"/>
    <property type="match status" value="1"/>
</dbReference>
<dbReference type="SUPFAM" id="SSF51445">
    <property type="entry name" value="(Trans)glycosidases"/>
    <property type="match status" value="1"/>
</dbReference>
<dbReference type="SUPFAM" id="SSF81296">
    <property type="entry name" value="E set domains"/>
    <property type="match status" value="1"/>
</dbReference>
<dbReference type="SUPFAM" id="SSF51011">
    <property type="entry name" value="Glycosyl hydrolase domain"/>
    <property type="match status" value="1"/>
</dbReference>
<organism>
    <name type="scientific">Rhodopseudomonas palustris (strain HaA2)</name>
    <dbReference type="NCBI Taxonomy" id="316058"/>
    <lineage>
        <taxon>Bacteria</taxon>
        <taxon>Pseudomonadati</taxon>
        <taxon>Pseudomonadota</taxon>
        <taxon>Alphaproteobacteria</taxon>
        <taxon>Hyphomicrobiales</taxon>
        <taxon>Nitrobacteraceae</taxon>
        <taxon>Rhodopseudomonas</taxon>
    </lineage>
</organism>
<evidence type="ECO:0000255" key="1">
    <source>
        <dbReference type="HAMAP-Rule" id="MF_00685"/>
    </source>
</evidence>
<accession>Q2IYX0</accession>
<gene>
    <name evidence="1" type="primary">glgB</name>
    <name type="ordered locus">RPB_1882</name>
</gene>
<comment type="function">
    <text evidence="1">Catalyzes the formation of the alpha-1,6-glucosidic linkages in glycogen by scission of a 1,4-alpha-linked oligosaccharide from growing alpha-1,4-glucan chains and the subsequent attachment of the oligosaccharide to the alpha-1,6 position.</text>
</comment>
<comment type="catalytic activity">
    <reaction evidence="1">
        <text>Transfers a segment of a (1-&gt;4)-alpha-D-glucan chain to a primary hydroxy group in a similar glucan chain.</text>
        <dbReference type="EC" id="2.4.1.18"/>
    </reaction>
</comment>
<comment type="pathway">
    <text evidence="1">Glycan biosynthesis; glycogen biosynthesis.</text>
</comment>
<comment type="subunit">
    <text evidence="1">Monomer.</text>
</comment>
<comment type="similarity">
    <text evidence="1">Belongs to the glycosyl hydrolase 13 family. GlgB subfamily.</text>
</comment>
<sequence>MTVQLTDDAYAVLEGRHADPFRYLGPHPEDDRVVVRALLPDATAVEAVGEHGETAILERVHDAGLFAGPLPNGSHRYQLRARFGDTTVDLEDPYRFPPILTEFDLYLLGEGTDQRLYDKLGAHPMVLEGVRGVGFVVLAPNARRVSVVGDFNFWNPRRHQMRVRGNGYWELFIPGATAGDHYKFDMTGPNGETLPQKSDPMAFAAEMRPKTASIVVDQTRLPLPRPAPDNINALGAPMSIYEVHLGSWRRKDGEQWLTYRELAEQLPAYVRDMGFTHVEFLPVSEHPFDGSWGYQPTGLFAPTSRFGTPEDFCALIDACHEHGIGVLLDWVPGHFPDDPHGLGNFDGTALYEHANPLQGRHLDWGTLIYNYGRTEVVNFLVSNALFWLERYRIDGLRVDAVASMLYLDYSRPAGGWIPNKFGGRENIEAIDFLRRFNAEVYAKFPQATTAAEESTAWPQVSRPVEFGGLGFGYKWNMGWMHDTLNYISKDPIHRKYHHGQILFGLHYAFSENFILPLSHDEVVHGKRSILGRMPGDEWQRFANLRAYYAFMFAHPGKKLMFMGSEFGQEREWNHDRSLDWHLLDTPKYAGIQALVRDLNRLYRDLPALHQLDCDPFGFEWIITEDAARNVFAWMRKGNDTRARCLVIVNFSPNVYQDYRVRVPFPGRWREVLNSDAAIYGGSNVGNAGEVRTLEGLVPELSLNIPPLAAIFLKPED</sequence>
<name>GLGB_RHOP2</name>
<keyword id="KW-0119">Carbohydrate metabolism</keyword>
<keyword id="KW-0320">Glycogen biosynthesis</keyword>
<keyword id="KW-0321">Glycogen metabolism</keyword>
<keyword id="KW-0328">Glycosyltransferase</keyword>
<keyword id="KW-1185">Reference proteome</keyword>
<keyword id="KW-0808">Transferase</keyword>
<proteinExistence type="inferred from homology"/>
<protein>
    <recommendedName>
        <fullName evidence="1">1,4-alpha-glucan branching enzyme GlgB</fullName>
        <ecNumber evidence="1">2.4.1.18</ecNumber>
    </recommendedName>
    <alternativeName>
        <fullName evidence="1">1,4-alpha-D-glucan:1,4-alpha-D-glucan 6-glucosyl-transferase</fullName>
    </alternativeName>
    <alternativeName>
        <fullName evidence="1">Alpha-(1-&gt;4)-glucan branching enzyme</fullName>
    </alternativeName>
    <alternativeName>
        <fullName evidence="1">Glycogen branching enzyme</fullName>
        <shortName evidence="1">BE</shortName>
    </alternativeName>
</protein>
<reference key="1">
    <citation type="submission" date="2006-01" db="EMBL/GenBank/DDBJ databases">
        <title>Complete sequence of Rhodopseudomonas palustris HaA2.</title>
        <authorList>
            <consortium name="US DOE Joint Genome Institute"/>
            <person name="Copeland A."/>
            <person name="Lucas S."/>
            <person name="Lapidus A."/>
            <person name="Barry K."/>
            <person name="Detter J.C."/>
            <person name="Glavina T."/>
            <person name="Hammon N."/>
            <person name="Israni S."/>
            <person name="Pitluck S."/>
            <person name="Chain P."/>
            <person name="Malfatti S."/>
            <person name="Shin M."/>
            <person name="Vergez L."/>
            <person name="Schmutz J."/>
            <person name="Larimer F."/>
            <person name="Land M."/>
            <person name="Hauser L."/>
            <person name="Pelletier D.A."/>
            <person name="Kyrpides N."/>
            <person name="Anderson I."/>
            <person name="Oda Y."/>
            <person name="Harwood C.S."/>
            <person name="Richardson P."/>
        </authorList>
    </citation>
    <scope>NUCLEOTIDE SEQUENCE [LARGE SCALE GENOMIC DNA]</scope>
    <source>
        <strain>HaA2</strain>
    </source>
</reference>
<feature type="chain" id="PRO_0000260691" description="1,4-alpha-glucan branching enzyme GlgB">
    <location>
        <begin position="1"/>
        <end position="716"/>
    </location>
</feature>
<feature type="active site" description="Nucleophile" evidence="1">
    <location>
        <position position="399"/>
    </location>
</feature>
<feature type="active site" description="Proton donor" evidence="1">
    <location>
        <position position="452"/>
    </location>
</feature>